<accession>P59572</accession>
<dbReference type="EMBL" id="AE016853">
    <property type="protein sequence ID" value="AAO57381.1"/>
    <property type="status" value="ALT_INIT"/>
    <property type="molecule type" value="Genomic_DNA"/>
</dbReference>
<dbReference type="RefSeq" id="NP_793686.1">
    <property type="nucleotide sequence ID" value="NC_004578.1"/>
</dbReference>
<dbReference type="SMR" id="P59572"/>
<dbReference type="STRING" id="223283.PSPTO_3915"/>
<dbReference type="KEGG" id="pst:PSPTO_3915"/>
<dbReference type="PATRIC" id="fig|223283.9.peg.4014"/>
<dbReference type="eggNOG" id="COG3667">
    <property type="taxonomic scope" value="Bacteria"/>
</dbReference>
<dbReference type="HOGENOM" id="CLU_042913_0_0_6"/>
<dbReference type="OrthoDB" id="9778934at2"/>
<dbReference type="Proteomes" id="UP000002515">
    <property type="component" value="Chromosome"/>
</dbReference>
<dbReference type="GO" id="GO:0009279">
    <property type="term" value="C:cell outer membrane"/>
    <property type="evidence" value="ECO:0007669"/>
    <property type="project" value="UniProtKB-SubCell"/>
</dbReference>
<dbReference type="GO" id="GO:0005507">
    <property type="term" value="F:copper ion binding"/>
    <property type="evidence" value="ECO:0007669"/>
    <property type="project" value="InterPro"/>
</dbReference>
<dbReference type="GO" id="GO:0006878">
    <property type="term" value="P:intracellular copper ion homeostasis"/>
    <property type="evidence" value="ECO:0007669"/>
    <property type="project" value="InterPro"/>
</dbReference>
<dbReference type="InterPro" id="IPR007939">
    <property type="entry name" value="Cu-R_B_prcur"/>
</dbReference>
<dbReference type="Pfam" id="PF05275">
    <property type="entry name" value="CopB"/>
    <property type="match status" value="1"/>
</dbReference>
<dbReference type="SUPFAM" id="SSF56935">
    <property type="entry name" value="Porins"/>
    <property type="match status" value="1"/>
</dbReference>
<gene>
    <name type="primary">copB</name>
    <name type="ordered locus">PSPTO_3915</name>
</gene>
<organism>
    <name type="scientific">Pseudomonas syringae pv. tomato (strain ATCC BAA-871 / DC3000)</name>
    <dbReference type="NCBI Taxonomy" id="223283"/>
    <lineage>
        <taxon>Bacteria</taxon>
        <taxon>Pseudomonadati</taxon>
        <taxon>Pseudomonadota</taxon>
        <taxon>Gammaproteobacteria</taxon>
        <taxon>Pseudomonadales</taxon>
        <taxon>Pseudomonadaceae</taxon>
        <taxon>Pseudomonas</taxon>
    </lineage>
</organism>
<sequence length="294" mass="31681">MRTLPLNGSRNSSRLPTLLLAAGLAMTPWAPALAAGMEGMDHGSHSMPMGASSDAPAQSRTPIPPVTDADRAAVYTSHSGHQVHDSAINSYFVADKLEWQDANDGSALAWDLSGWIGGDIDRLLLRSEGERTNGKTEEAEVQALWGHAVSSSWDVVAGARQDFKPGAPQTWAAFGLQGQAISDLDVEATAFIGDAGQTAARLEADYDLLLTNDLILQPTGELNFYGKNDPQRGNGSGLSTSEFGLRLRYEITPQFAPYVGVTWNRSYGKTADYAREDDEDVAQARLVVGLRLWF</sequence>
<evidence type="ECO:0000250" key="1"/>
<evidence type="ECO:0000255" key="2"/>
<evidence type="ECO:0000256" key="3">
    <source>
        <dbReference type="SAM" id="MobiDB-lite"/>
    </source>
</evidence>
<evidence type="ECO:0000305" key="4"/>
<comment type="function">
    <text evidence="1">Exact function not known. Could be involved in copper resistance (By similarity).</text>
</comment>
<comment type="subcellular location">
    <subcellularLocation>
        <location evidence="1">Cell outer membrane</location>
        <topology evidence="1">Peripheral membrane protein</topology>
    </subcellularLocation>
</comment>
<comment type="sequence caution" evidence="4">
    <conflict type="erroneous initiation">
        <sequence resource="EMBL-CDS" id="AAO57381"/>
    </conflict>
</comment>
<name>COPB_PSESM</name>
<protein>
    <recommendedName>
        <fullName>Copper resistance protein B homolog</fullName>
    </recommendedName>
</protein>
<feature type="signal peptide" evidence="2">
    <location>
        <begin position="1"/>
        <end position="34"/>
    </location>
</feature>
<feature type="chain" id="PRO_0000020982" description="Copper resistance protein B homolog">
    <location>
        <begin position="35"/>
        <end position="294"/>
    </location>
</feature>
<feature type="region of interest" description="Disordered" evidence="3">
    <location>
        <begin position="40"/>
        <end position="60"/>
    </location>
</feature>
<proteinExistence type="inferred from homology"/>
<keyword id="KW-0998">Cell outer membrane</keyword>
<keyword id="KW-0186">Copper</keyword>
<keyword id="KW-0472">Membrane</keyword>
<keyword id="KW-1185">Reference proteome</keyword>
<keyword id="KW-0732">Signal</keyword>
<reference key="1">
    <citation type="journal article" date="2003" name="Proc. Natl. Acad. Sci. U.S.A.">
        <title>The complete genome sequence of the Arabidopsis and tomato pathogen Pseudomonas syringae pv. tomato DC3000.</title>
        <authorList>
            <person name="Buell C.R."/>
            <person name="Joardar V."/>
            <person name="Lindeberg M."/>
            <person name="Selengut J."/>
            <person name="Paulsen I.T."/>
            <person name="Gwinn M.L."/>
            <person name="Dodson R.J."/>
            <person name="DeBoy R.T."/>
            <person name="Durkin A.S."/>
            <person name="Kolonay J.F."/>
            <person name="Madupu R."/>
            <person name="Daugherty S.C."/>
            <person name="Brinkac L.M."/>
            <person name="Beanan M.J."/>
            <person name="Haft D.H."/>
            <person name="Nelson W.C."/>
            <person name="Davidsen T.M."/>
            <person name="Zafar N."/>
            <person name="Zhou L."/>
            <person name="Liu J."/>
            <person name="Yuan Q."/>
            <person name="Khouri H.M."/>
            <person name="Fedorova N.B."/>
            <person name="Tran B."/>
            <person name="Russell D."/>
            <person name="Berry K.J."/>
            <person name="Utterback T.R."/>
            <person name="Van Aken S.E."/>
            <person name="Feldblyum T.V."/>
            <person name="D'Ascenzo M."/>
            <person name="Deng W.-L."/>
            <person name="Ramos A.R."/>
            <person name="Alfano J.R."/>
            <person name="Cartinhour S."/>
            <person name="Chatterjee A.K."/>
            <person name="Delaney T.P."/>
            <person name="Lazarowitz S.G."/>
            <person name="Martin G.B."/>
            <person name="Schneider D.J."/>
            <person name="Tang X."/>
            <person name="Bender C.L."/>
            <person name="White O."/>
            <person name="Fraser C.M."/>
            <person name="Collmer A."/>
        </authorList>
    </citation>
    <scope>NUCLEOTIDE SEQUENCE [LARGE SCALE GENOMIC DNA]</scope>
    <source>
        <strain>ATCC BAA-871 / DC3000</strain>
    </source>
</reference>